<dbReference type="EMBL" id="AB060859">
    <property type="protein sequence ID" value="BAB46877.1"/>
    <property type="molecule type" value="mRNA"/>
</dbReference>
<dbReference type="BMRB" id="Q95KI0"/>
<dbReference type="SMR" id="Q95KI0"/>
<dbReference type="STRING" id="9541.ENSMFAP00000036242"/>
<dbReference type="eggNOG" id="KOG0125">
    <property type="taxonomic scope" value="Eukaryota"/>
</dbReference>
<dbReference type="eggNOG" id="KOG2346">
    <property type="taxonomic scope" value="Eukaryota"/>
</dbReference>
<dbReference type="Proteomes" id="UP000233100">
    <property type="component" value="Unplaced"/>
</dbReference>
<dbReference type="GO" id="GO:0005737">
    <property type="term" value="C:cytoplasm"/>
    <property type="evidence" value="ECO:0007669"/>
    <property type="project" value="UniProtKB-SubCell"/>
</dbReference>
<dbReference type="GO" id="GO:0005634">
    <property type="term" value="C:nucleus"/>
    <property type="evidence" value="ECO:0007669"/>
    <property type="project" value="UniProtKB-SubCell"/>
</dbReference>
<dbReference type="GO" id="GO:0003729">
    <property type="term" value="F:mRNA binding"/>
    <property type="evidence" value="ECO:0007669"/>
    <property type="project" value="TreeGrafter"/>
</dbReference>
<dbReference type="GO" id="GO:0006397">
    <property type="term" value="P:mRNA processing"/>
    <property type="evidence" value="ECO:0007669"/>
    <property type="project" value="UniProtKB-KW"/>
</dbReference>
<dbReference type="GO" id="GO:0007399">
    <property type="term" value="P:nervous system development"/>
    <property type="evidence" value="ECO:0007669"/>
    <property type="project" value="InterPro"/>
</dbReference>
<dbReference type="GO" id="GO:0000381">
    <property type="term" value="P:regulation of alternative mRNA splicing, via spliceosome"/>
    <property type="evidence" value="ECO:0007669"/>
    <property type="project" value="InterPro"/>
</dbReference>
<dbReference type="GO" id="GO:0008380">
    <property type="term" value="P:RNA splicing"/>
    <property type="evidence" value="ECO:0007669"/>
    <property type="project" value="UniProtKB-KW"/>
</dbReference>
<dbReference type="CDD" id="cd12407">
    <property type="entry name" value="RRM_FOX1_like"/>
    <property type="match status" value="1"/>
</dbReference>
<dbReference type="FunFam" id="3.30.70.330:FF:000375">
    <property type="entry name" value="RNA binding fox-1 homolog 1"/>
    <property type="match status" value="1"/>
</dbReference>
<dbReference type="Gene3D" id="3.30.70.330">
    <property type="match status" value="1"/>
</dbReference>
<dbReference type="InterPro" id="IPR025670">
    <property type="entry name" value="Fox-1_C_dom"/>
</dbReference>
<dbReference type="InterPro" id="IPR034237">
    <property type="entry name" value="FOX1_RRM"/>
</dbReference>
<dbReference type="InterPro" id="IPR012677">
    <property type="entry name" value="Nucleotide-bd_a/b_plait_sf"/>
</dbReference>
<dbReference type="InterPro" id="IPR035979">
    <property type="entry name" value="RBD_domain_sf"/>
</dbReference>
<dbReference type="InterPro" id="IPR017325">
    <property type="entry name" value="RBFOX1-3"/>
</dbReference>
<dbReference type="InterPro" id="IPR047131">
    <property type="entry name" value="RBFOX1-like"/>
</dbReference>
<dbReference type="InterPro" id="IPR000504">
    <property type="entry name" value="RRM_dom"/>
</dbReference>
<dbReference type="PANTHER" id="PTHR15597">
    <property type="entry name" value="ATAXIN 2-BINDING PROTEIN 1-RELATED"/>
    <property type="match status" value="1"/>
</dbReference>
<dbReference type="PANTHER" id="PTHR15597:SF45">
    <property type="entry name" value="RNA BINDING PROTEIN FOX-1 HOMOLOG 1"/>
    <property type="match status" value="1"/>
</dbReference>
<dbReference type="Pfam" id="PF12414">
    <property type="entry name" value="Fox-1_C"/>
    <property type="match status" value="1"/>
</dbReference>
<dbReference type="Pfam" id="PF00076">
    <property type="entry name" value="RRM_1"/>
    <property type="match status" value="1"/>
</dbReference>
<dbReference type="PIRSF" id="PIRSF037932">
    <property type="entry name" value="Ataxin_2_bd_A2BP"/>
    <property type="match status" value="1"/>
</dbReference>
<dbReference type="SMART" id="SM00360">
    <property type="entry name" value="RRM"/>
    <property type="match status" value="1"/>
</dbReference>
<dbReference type="SUPFAM" id="SSF54928">
    <property type="entry name" value="RNA-binding domain, RBD"/>
    <property type="match status" value="1"/>
</dbReference>
<dbReference type="PROSITE" id="PS50102">
    <property type="entry name" value="RRM"/>
    <property type="match status" value="1"/>
</dbReference>
<organism>
    <name type="scientific">Macaca fascicularis</name>
    <name type="common">Crab-eating macaque</name>
    <name type="synonym">Cynomolgus monkey</name>
    <dbReference type="NCBI Taxonomy" id="9541"/>
    <lineage>
        <taxon>Eukaryota</taxon>
        <taxon>Metazoa</taxon>
        <taxon>Chordata</taxon>
        <taxon>Craniata</taxon>
        <taxon>Vertebrata</taxon>
        <taxon>Euteleostomi</taxon>
        <taxon>Mammalia</taxon>
        <taxon>Eutheria</taxon>
        <taxon>Euarchontoglires</taxon>
        <taxon>Primates</taxon>
        <taxon>Haplorrhini</taxon>
        <taxon>Catarrhini</taxon>
        <taxon>Cercopithecidae</taxon>
        <taxon>Cercopithecinae</taxon>
        <taxon>Macaca</taxon>
    </lineage>
</organism>
<name>RFOX1_MACFA</name>
<sequence>MEEKGSRMVQQGNQEAAAAPDTMAQPYASAQFAPPQNGIPAEYTAPHPHPAPEYTGQTTVPEHTLNLYPPAQTHSEQSPADTNAQTVSGTATQTDDAAPTDGQPQTQPSENTENKSQPKRLHVSNIPFRFRDPDLRQMFGQFGKILDVEIIFNERGSKGFGFVTFENSADADRAREKLHGTVVEGRKIEVNNATARVMTNKKTVNPYTNGWKLNPVVGAVYSPEFYAGTVLLCQANQEGSSMYSAPSSLVYTSAMPGFPYPAATAAAAYRGAHLRGRGRTVYNTFRAAAPPPPIPAYGGVVYQDGFYGADIYGGYAAYRYAQPTPATAAAYSDRNQFVFVAADEISCNTSAVTDEFMLPTPTTTHLLQPPPTALVP</sequence>
<protein>
    <recommendedName>
        <fullName>RNA binding protein fox-1 homolog 1</fullName>
    </recommendedName>
    <alternativeName>
        <fullName>Ataxin-2-binding protein 1</fullName>
    </alternativeName>
    <alternativeName>
        <fullName>Fox-1 homolog A</fullName>
    </alternativeName>
</protein>
<keyword id="KW-0963">Cytoplasm</keyword>
<keyword id="KW-0488">Methylation</keyword>
<keyword id="KW-0507">mRNA processing</keyword>
<keyword id="KW-0508">mRNA splicing</keyword>
<keyword id="KW-0539">Nucleus</keyword>
<keyword id="KW-1185">Reference proteome</keyword>
<keyword id="KW-0694">RNA-binding</keyword>
<evidence type="ECO:0000250" key="1"/>
<evidence type="ECO:0000250" key="2">
    <source>
        <dbReference type="UniProtKB" id="Q9JJ43"/>
    </source>
</evidence>
<evidence type="ECO:0000255" key="3">
    <source>
        <dbReference type="PROSITE-ProRule" id="PRU00176"/>
    </source>
</evidence>
<evidence type="ECO:0000256" key="4">
    <source>
        <dbReference type="SAM" id="MobiDB-lite"/>
    </source>
</evidence>
<reference key="1">
    <citation type="submission" date="2001-04" db="EMBL/GenBank/DDBJ databases">
        <title>Isolation of full-length cDNA clones from macaque brain cDNA libraries.</title>
        <authorList>
            <person name="Osada N."/>
            <person name="Hida M."/>
            <person name="Kusuda J."/>
            <person name="Tanuma R."/>
            <person name="Iseki K."/>
            <person name="Hirai M."/>
            <person name="Terao K."/>
            <person name="Suzuki Y."/>
            <person name="Sugano S."/>
            <person name="Hashimoto K."/>
        </authorList>
    </citation>
    <scope>NUCLEOTIDE SEQUENCE [LARGE SCALE MRNA]</scope>
    <source>
        <tissue>Temporal cortex</tissue>
    </source>
</reference>
<feature type="chain" id="PRO_0000317110" description="RNA binding protein fox-1 homolog 1">
    <location>
        <begin position="1"/>
        <end position="376"/>
    </location>
</feature>
<feature type="domain" description="RRM" evidence="3">
    <location>
        <begin position="119"/>
        <end position="195"/>
    </location>
</feature>
<feature type="region of interest" description="Disordered" evidence="4">
    <location>
        <begin position="1"/>
        <end position="126"/>
    </location>
</feature>
<feature type="compositionally biased region" description="Polar residues" evidence="4">
    <location>
        <begin position="72"/>
        <end position="89"/>
    </location>
</feature>
<feature type="compositionally biased region" description="Low complexity" evidence="4">
    <location>
        <begin position="90"/>
        <end position="101"/>
    </location>
</feature>
<feature type="compositionally biased region" description="Polar residues" evidence="4">
    <location>
        <begin position="102"/>
        <end position="115"/>
    </location>
</feature>
<feature type="site" description="Interaction with RNA" evidence="1">
    <location>
        <position position="120"/>
    </location>
</feature>
<feature type="site" description="Interaction with RNA" evidence="1">
    <location>
        <position position="128"/>
    </location>
</feature>
<feature type="site" description="Interaction with RNA" evidence="1">
    <location>
        <position position="129"/>
    </location>
</feature>
<feature type="site" description="Interaction with RNA" evidence="1">
    <location>
        <position position="153"/>
    </location>
</feature>
<feature type="site" description="Interaction with RNA" evidence="1">
    <location>
        <position position="158"/>
    </location>
</feature>
<feature type="site" description="Interaction with RNA" evidence="1">
    <location>
        <position position="162"/>
    </location>
</feature>
<feature type="site" description="Interaction with RNA" evidence="1">
    <location>
        <position position="186"/>
    </location>
</feature>
<feature type="site" description="Interaction with RNA" evidence="1">
    <location>
        <position position="196"/>
    </location>
</feature>
<feature type="modified residue" description="Asymmetric dimethylarginine" evidence="2">
    <location>
        <position position="319"/>
    </location>
</feature>
<proteinExistence type="evidence at transcript level"/>
<comment type="function">
    <text evidence="1">RNA-binding protein that regulates alternative splicing events by binding to 5'-UGCAUGU-3' elements. Prevents binding of U2AF2 to the 3'-splice site. Regulates alternative splicing of tissue-specific exons and of differentially spliced exons during erythropoiesis (By similarity).</text>
</comment>
<comment type="subunit">
    <text evidence="1">Binds to the C-terminus of ATXN2.</text>
</comment>
<comment type="subcellular location">
    <subcellularLocation>
        <location evidence="1">Nucleus</location>
    </subcellularLocation>
    <subcellularLocation>
        <location evidence="1">Cytoplasm</location>
    </subcellularLocation>
</comment>
<gene>
    <name type="primary">RBFOX1</name>
    <name type="synonym">A2BP1</name>
    <name type="synonym">FOX1</name>
    <name type="ORF">QtrA-11594</name>
</gene>
<accession>Q95KI0</accession>